<keyword id="KW-0004">4Fe-4S</keyword>
<keyword id="KW-0067">ATP-binding</keyword>
<keyword id="KW-0963">Cytoplasm</keyword>
<keyword id="KW-0408">Iron</keyword>
<keyword id="KW-0411">Iron-sulfur</keyword>
<keyword id="KW-0418">Kinase</keyword>
<keyword id="KW-0479">Metal-binding</keyword>
<keyword id="KW-0547">Nucleotide-binding</keyword>
<keyword id="KW-0597">Phosphoprotein</keyword>
<keyword id="KW-1185">Reference proteome</keyword>
<keyword id="KW-0808">Transferase</keyword>
<keyword id="KW-0902">Two-component regulatory system</keyword>
<sequence length="347" mass="39953">MKSISNRDKLQDLLTQYYLNTNEKMVFLNSTGEVIALNEAAEEVFADDNDYSQMTNAVCRRCEGYSNEYDIMSCENCFLEALEIGKGSFQVFIRTKDNKIQPYTASYELIDHEKGIYAFTLHNVSPQIQRQERMYQRKMMQKTISAQENERKRISRELHDGIVQELINVDVELRLLKYQQDKDELIDNSKRIEGIMSRLIDDVRNLSVELRPSSLDDLGLDAAFRSYFKQFEKNYGIHVNYHTNFSAQRFDNEIETVVYRVVQEALFNALKYAQVDIVEVSLQLNENNIIAEVSDRGVGFKRGDDPKGTGLGLFGMNERAELVNGTVNIDSQINRGTIVTLEVPITD</sequence>
<proteinExistence type="evidence at protein level"/>
<evidence type="ECO:0000255" key="1"/>
<evidence type="ECO:0000255" key="2">
    <source>
        <dbReference type="PROSITE-ProRule" id="PRU00107"/>
    </source>
</evidence>
<evidence type="ECO:0000269" key="3">
    <source>
    </source>
</evidence>
<evidence type="ECO:0000269" key="4">
    <source>
    </source>
</evidence>
<evidence type="ECO:0000305" key="5"/>
<protein>
    <recommendedName>
        <fullName>Oxygen sensor histidine kinase NreB</fullName>
        <ecNumber>2.7.13.3</ecNumber>
    </recommendedName>
    <alternativeName>
        <fullName>Nitrogen regulation protein B</fullName>
    </alternativeName>
</protein>
<organism>
    <name type="scientific">Staphylococcus carnosus (strain TM300)</name>
    <dbReference type="NCBI Taxonomy" id="396513"/>
    <lineage>
        <taxon>Bacteria</taxon>
        <taxon>Bacillati</taxon>
        <taxon>Bacillota</taxon>
        <taxon>Bacilli</taxon>
        <taxon>Bacillales</taxon>
        <taxon>Staphylococcaceae</taxon>
        <taxon>Staphylococcus</taxon>
    </lineage>
</organism>
<dbReference type="EC" id="2.7.13.3"/>
<dbReference type="EMBL" id="AF029224">
    <property type="protein sequence ID" value="AAP79639.1"/>
    <property type="molecule type" value="Genomic_DNA"/>
</dbReference>
<dbReference type="EMBL" id="AM295250">
    <property type="protein sequence ID" value="CAL28795.1"/>
    <property type="molecule type" value="Genomic_DNA"/>
</dbReference>
<dbReference type="RefSeq" id="WP_015901131.1">
    <property type="nucleotide sequence ID" value="NC_012121.1"/>
</dbReference>
<dbReference type="SMR" id="Q7WZY5"/>
<dbReference type="GeneID" id="93794344"/>
<dbReference type="KEGG" id="sca:SCA_1889"/>
<dbReference type="eggNOG" id="COG4585">
    <property type="taxonomic scope" value="Bacteria"/>
</dbReference>
<dbReference type="HOGENOM" id="CLU_000445_114_0_9"/>
<dbReference type="OrthoDB" id="9760839at2"/>
<dbReference type="BioCyc" id="SCAR396513:SCA_RS09585-MONOMER"/>
<dbReference type="Proteomes" id="UP000000444">
    <property type="component" value="Chromosome"/>
</dbReference>
<dbReference type="GO" id="GO:0005737">
    <property type="term" value="C:cytoplasm"/>
    <property type="evidence" value="ECO:0007669"/>
    <property type="project" value="UniProtKB-SubCell"/>
</dbReference>
<dbReference type="GO" id="GO:0016020">
    <property type="term" value="C:membrane"/>
    <property type="evidence" value="ECO:0007669"/>
    <property type="project" value="InterPro"/>
</dbReference>
<dbReference type="GO" id="GO:0051539">
    <property type="term" value="F:4 iron, 4 sulfur cluster binding"/>
    <property type="evidence" value="ECO:0007669"/>
    <property type="project" value="UniProtKB-KW"/>
</dbReference>
<dbReference type="GO" id="GO:0005524">
    <property type="term" value="F:ATP binding"/>
    <property type="evidence" value="ECO:0007669"/>
    <property type="project" value="UniProtKB-KW"/>
</dbReference>
<dbReference type="GO" id="GO:0005506">
    <property type="term" value="F:iron ion binding"/>
    <property type="evidence" value="ECO:0007669"/>
    <property type="project" value="InterPro"/>
</dbReference>
<dbReference type="GO" id="GO:0000155">
    <property type="term" value="F:phosphorelay sensor kinase activity"/>
    <property type="evidence" value="ECO:0007669"/>
    <property type="project" value="InterPro"/>
</dbReference>
<dbReference type="GO" id="GO:0046983">
    <property type="term" value="F:protein dimerization activity"/>
    <property type="evidence" value="ECO:0007669"/>
    <property type="project" value="InterPro"/>
</dbReference>
<dbReference type="CDD" id="cd16917">
    <property type="entry name" value="HATPase_UhpB-NarQ-NarX-like"/>
    <property type="match status" value="1"/>
</dbReference>
<dbReference type="Gene3D" id="1.20.5.1930">
    <property type="match status" value="1"/>
</dbReference>
<dbReference type="Gene3D" id="3.30.565.10">
    <property type="entry name" value="Histidine kinase-like ATPase, C-terminal domain"/>
    <property type="match status" value="1"/>
</dbReference>
<dbReference type="InterPro" id="IPR036890">
    <property type="entry name" value="HATPase_C_sf"/>
</dbReference>
<dbReference type="InterPro" id="IPR005467">
    <property type="entry name" value="His_kinase_dom"/>
</dbReference>
<dbReference type="InterPro" id="IPR050482">
    <property type="entry name" value="Sensor_HK_TwoCompSys"/>
</dbReference>
<dbReference type="InterPro" id="IPR004358">
    <property type="entry name" value="Sig_transdc_His_kin-like_C"/>
</dbReference>
<dbReference type="InterPro" id="IPR011712">
    <property type="entry name" value="Sig_transdc_His_kin_sub3_dim/P"/>
</dbReference>
<dbReference type="InterPro" id="IPR017203">
    <property type="entry name" value="Sig_transdc_His_kinase_NreB"/>
</dbReference>
<dbReference type="PANTHER" id="PTHR24421">
    <property type="entry name" value="NITRATE/NITRITE SENSOR PROTEIN NARX-RELATED"/>
    <property type="match status" value="1"/>
</dbReference>
<dbReference type="PANTHER" id="PTHR24421:SF10">
    <property type="entry name" value="NITRATE_NITRITE SENSOR PROTEIN NARQ"/>
    <property type="match status" value="1"/>
</dbReference>
<dbReference type="Pfam" id="PF02518">
    <property type="entry name" value="HATPase_c"/>
    <property type="match status" value="1"/>
</dbReference>
<dbReference type="Pfam" id="PF07730">
    <property type="entry name" value="HisKA_3"/>
    <property type="match status" value="1"/>
</dbReference>
<dbReference type="PIRSF" id="PIRSF037432">
    <property type="entry name" value="STHK_NreB"/>
    <property type="match status" value="1"/>
</dbReference>
<dbReference type="PRINTS" id="PR00344">
    <property type="entry name" value="BCTRLSENSOR"/>
</dbReference>
<dbReference type="SMART" id="SM00387">
    <property type="entry name" value="HATPase_c"/>
    <property type="match status" value="1"/>
</dbReference>
<dbReference type="SUPFAM" id="SSF55874">
    <property type="entry name" value="ATPase domain of HSP90 chaperone/DNA topoisomerase II/histidine kinase"/>
    <property type="match status" value="1"/>
</dbReference>
<dbReference type="PROSITE" id="PS50109">
    <property type="entry name" value="HIS_KIN"/>
    <property type="match status" value="1"/>
</dbReference>
<gene>
    <name type="primary">nreB</name>
    <name type="ordered locus">Sca_1889</name>
</gene>
<reference key="1">
    <citation type="journal article" date="2002" name="J. Bacteriol.">
        <title>The nitrate reductase and nitrite reductase operons and the narT gene of Staphylococcus carnosus are positively controlled by the novel two-component system NreBC.</title>
        <authorList>
            <person name="Fedtke I."/>
            <person name="Kamps A."/>
            <person name="Krismer B."/>
            <person name="Goetz F."/>
        </authorList>
    </citation>
    <scope>NUCLEOTIDE SEQUENCE [GENOMIC DNA]</scope>
    <scope>FUNCTION</scope>
    <scope>INHIBITION BY ADP</scope>
    <scope>AUTOPHOSPHORYLATION</scope>
    <scope>MUTAGENESIS OF CYS-62</scope>
</reference>
<reference key="2">
    <citation type="journal article" date="2009" name="Appl. Environ. Microbiol.">
        <title>Genome analysis of the meat starter culture bacterium Staphylococcus carnosus TM300.</title>
        <authorList>
            <person name="Rosenstein R."/>
            <person name="Nerz C."/>
            <person name="Biswas L."/>
            <person name="Resch A."/>
            <person name="Raddatz G."/>
            <person name="Schuster S.C."/>
            <person name="Goetz F."/>
        </authorList>
    </citation>
    <scope>NUCLEOTIDE SEQUENCE [LARGE SCALE GENOMIC DNA]</scope>
    <source>
        <strain>TM300</strain>
    </source>
</reference>
<reference key="3">
    <citation type="journal article" date="2004" name="Mol. Microbiol.">
        <title>Staphylococcal NreB: an O(2)-sensing histidine protein kinase with an O(2)-labile iron-sulphur cluster of the FNR type.</title>
        <authorList>
            <person name="Kamps A."/>
            <person name="Achebach S."/>
            <person name="Fedtke I."/>
            <person name="Unden G."/>
            <person name="Goetz F."/>
        </authorList>
    </citation>
    <scope>FUNCTION AS AN OXYGEN SENSOR</scope>
    <scope>ACTIVITY REGULATION</scope>
    <scope>AUTOPHOSPHORYLATION</scope>
    <scope>IRON-SULFUR CLUSTER</scope>
    <scope>MUTAGENESIS OF CYS-62</scope>
</reference>
<name>NREB_STACT</name>
<comment type="function">
    <text evidence="3 4">Member of the two-component regulatory system NreB/NreC involved in the control of dissimilatory nitrate/nitrite reduction in response to oxygen. NreB functions as a direct oxygen sensor histidine kinase which is autophosphorylated, in the absence of oxygen, probably at the conserved histidine residue, and transfers its phosphate group probably to a conserved aspartate residue of NreC. NreB/NreC activates the expression of the nitrate (narGHJI) and nitrite (nir) reductase operons, as well as the putative nitrate transporter gene narT.</text>
</comment>
<comment type="catalytic activity">
    <reaction>
        <text>ATP + protein L-histidine = ADP + protein N-phospho-L-histidine.</text>
        <dbReference type="EC" id="2.7.13.3"/>
    </reaction>
</comment>
<comment type="cofactor">
    <cofactor evidence="5">
        <name>[4Fe-4S] cluster</name>
        <dbReference type="ChEBI" id="CHEBI:49883"/>
    </cofactor>
    <text evidence="5">Binds 1 [4Fe-4S] cluster.</text>
</comment>
<comment type="activity regulation">
    <text evidence="4">Activated by cysteine desulfurase, Fe(2+) ions and cysteine and inhibited by oxygen and ADP.</text>
</comment>
<comment type="subcellular location">
    <subcellularLocation>
        <location evidence="5">Cytoplasm</location>
    </subcellularLocation>
</comment>
<comment type="PTM">
    <text>Autophosphorylated.</text>
</comment>
<comment type="miscellaneous">
    <text evidence="5">NreB may sense the oxygen concentration directly via the disassembly and reassembly of the FNR-type 4Fe-4S cluster. The iron-sulfur cluster controls the functional state of the kinase domain. Under oxic conditions, the iron-sulfur cluster is destroyed and the autophosphorylation activity of NreB is decreased. However, under anoxic conditions and in the presence of iron ions, the iron-sulfur cluster is formed and NreB is autophosphorylated (Probable).</text>
</comment>
<feature type="chain" id="PRO_0000349338" description="Oxygen sensor histidine kinase NreB">
    <location>
        <begin position="1"/>
        <end position="347"/>
    </location>
</feature>
<feature type="domain" description="Histidine kinase" evidence="2">
    <location>
        <begin position="153"/>
        <end position="347"/>
    </location>
</feature>
<feature type="binding site" evidence="1">
    <location>
        <position position="59"/>
    </location>
    <ligand>
        <name>[4Fe-4S] cluster</name>
        <dbReference type="ChEBI" id="CHEBI:49883"/>
    </ligand>
</feature>
<feature type="binding site" evidence="1">
    <location>
        <position position="62"/>
    </location>
    <ligand>
        <name>[4Fe-4S] cluster</name>
        <dbReference type="ChEBI" id="CHEBI:49883"/>
    </ligand>
</feature>
<feature type="binding site" evidence="1">
    <location>
        <position position="74"/>
    </location>
    <ligand>
        <name>[4Fe-4S] cluster</name>
        <dbReference type="ChEBI" id="CHEBI:49883"/>
    </ligand>
</feature>
<feature type="binding site" evidence="1">
    <location>
        <position position="77"/>
    </location>
    <ligand>
        <name>[4Fe-4S] cluster</name>
        <dbReference type="ChEBI" id="CHEBI:49883"/>
    </ligand>
</feature>
<feature type="modified residue" description="Phosphohistidine; by autocatalysis" evidence="2">
    <location>
        <position position="159"/>
    </location>
</feature>
<feature type="mutagenesis site" description="Impaired in nitrate and nitrite reduction and also exhibits a growth defect. Inhibits incorporation of the iron-sulfur cluster." evidence="3 4">
    <original>C</original>
    <variation>S</variation>
    <location>
        <position position="62"/>
    </location>
</feature>
<accession>Q7WZY5</accession>
<accession>B9DL90</accession>